<dbReference type="EC" id="4.2.1.20" evidence="1"/>
<dbReference type="EMBL" id="CP001139">
    <property type="protein sequence ID" value="ACH67202.1"/>
    <property type="molecule type" value="Genomic_DNA"/>
</dbReference>
<dbReference type="RefSeq" id="WP_012534267.1">
    <property type="nucleotide sequence ID" value="NC_011184.1"/>
</dbReference>
<dbReference type="SMR" id="B5FDB6"/>
<dbReference type="KEGG" id="vfm:VFMJ11_1110"/>
<dbReference type="HOGENOM" id="CLU_016734_0_4_6"/>
<dbReference type="UniPathway" id="UPA00035">
    <property type="reaction ID" value="UER00044"/>
</dbReference>
<dbReference type="Proteomes" id="UP000001857">
    <property type="component" value="Chromosome I"/>
</dbReference>
<dbReference type="GO" id="GO:0005829">
    <property type="term" value="C:cytosol"/>
    <property type="evidence" value="ECO:0007669"/>
    <property type="project" value="TreeGrafter"/>
</dbReference>
<dbReference type="GO" id="GO:0004834">
    <property type="term" value="F:tryptophan synthase activity"/>
    <property type="evidence" value="ECO:0007669"/>
    <property type="project" value="UniProtKB-UniRule"/>
</dbReference>
<dbReference type="CDD" id="cd04724">
    <property type="entry name" value="Tryptophan_synthase_alpha"/>
    <property type="match status" value="1"/>
</dbReference>
<dbReference type="FunFam" id="3.20.20.70:FF:000037">
    <property type="entry name" value="Tryptophan synthase alpha chain"/>
    <property type="match status" value="1"/>
</dbReference>
<dbReference type="Gene3D" id="3.20.20.70">
    <property type="entry name" value="Aldolase class I"/>
    <property type="match status" value="1"/>
</dbReference>
<dbReference type="HAMAP" id="MF_00131">
    <property type="entry name" value="Trp_synth_alpha"/>
    <property type="match status" value="1"/>
</dbReference>
<dbReference type="InterPro" id="IPR013785">
    <property type="entry name" value="Aldolase_TIM"/>
</dbReference>
<dbReference type="InterPro" id="IPR011060">
    <property type="entry name" value="RibuloseP-bd_barrel"/>
</dbReference>
<dbReference type="InterPro" id="IPR018204">
    <property type="entry name" value="Trp_synthase_alpha_AS"/>
</dbReference>
<dbReference type="InterPro" id="IPR002028">
    <property type="entry name" value="Trp_synthase_suA"/>
</dbReference>
<dbReference type="NCBIfam" id="TIGR00262">
    <property type="entry name" value="trpA"/>
    <property type="match status" value="1"/>
</dbReference>
<dbReference type="PANTHER" id="PTHR43406:SF1">
    <property type="entry name" value="TRYPTOPHAN SYNTHASE ALPHA CHAIN, CHLOROPLASTIC"/>
    <property type="match status" value="1"/>
</dbReference>
<dbReference type="PANTHER" id="PTHR43406">
    <property type="entry name" value="TRYPTOPHAN SYNTHASE, ALPHA CHAIN"/>
    <property type="match status" value="1"/>
</dbReference>
<dbReference type="Pfam" id="PF00290">
    <property type="entry name" value="Trp_syntA"/>
    <property type="match status" value="1"/>
</dbReference>
<dbReference type="SUPFAM" id="SSF51366">
    <property type="entry name" value="Ribulose-phoshate binding barrel"/>
    <property type="match status" value="1"/>
</dbReference>
<dbReference type="PROSITE" id="PS00167">
    <property type="entry name" value="TRP_SYNTHASE_ALPHA"/>
    <property type="match status" value="1"/>
</dbReference>
<proteinExistence type="inferred from homology"/>
<feature type="chain" id="PRO_1000095760" description="Tryptophan synthase alpha chain">
    <location>
        <begin position="1"/>
        <end position="268"/>
    </location>
</feature>
<feature type="active site" description="Proton acceptor" evidence="1">
    <location>
        <position position="49"/>
    </location>
</feature>
<feature type="active site" description="Proton acceptor" evidence="1">
    <location>
        <position position="60"/>
    </location>
</feature>
<evidence type="ECO:0000255" key="1">
    <source>
        <dbReference type="HAMAP-Rule" id="MF_00131"/>
    </source>
</evidence>
<name>TRPA_ALIFM</name>
<organism>
    <name type="scientific">Aliivibrio fischeri (strain MJ11)</name>
    <name type="common">Vibrio fischeri</name>
    <dbReference type="NCBI Taxonomy" id="388396"/>
    <lineage>
        <taxon>Bacteria</taxon>
        <taxon>Pseudomonadati</taxon>
        <taxon>Pseudomonadota</taxon>
        <taxon>Gammaproteobacteria</taxon>
        <taxon>Vibrionales</taxon>
        <taxon>Vibrionaceae</taxon>
        <taxon>Aliivibrio</taxon>
    </lineage>
</organism>
<sequence>MDRYQALFAQLEKKNQGAFVPFVTIGDPNPELSYNIMETLIEAGADALELGIPFSDPLADGPTIQGANIRALDSKTTPAICFELIAKIRSKYPETPIGLLVYANLVFANGIDDFYAKCQQAGVDSVLIADVPTNESQEFRESAIEHGIHPIFIAPPSASPETLETVAKLGGGYTYLLSRAGVTGAETKAGMPVAQLLERLNQYDAPPAILGFGISEPAQVEEAVKAGAAGAISGSATVKLIEQHQANPEALLKALTDFTSSMKAATQK</sequence>
<protein>
    <recommendedName>
        <fullName evidence="1">Tryptophan synthase alpha chain</fullName>
        <ecNumber evidence="1">4.2.1.20</ecNumber>
    </recommendedName>
</protein>
<reference key="1">
    <citation type="submission" date="2008-08" db="EMBL/GenBank/DDBJ databases">
        <title>Complete sequence of Vibrio fischeri strain MJ11.</title>
        <authorList>
            <person name="Mandel M.J."/>
            <person name="Stabb E.V."/>
            <person name="Ruby E.G."/>
            <person name="Ferriera S."/>
            <person name="Johnson J."/>
            <person name="Kravitz S."/>
            <person name="Beeson K."/>
            <person name="Sutton G."/>
            <person name="Rogers Y.-H."/>
            <person name="Friedman R."/>
            <person name="Frazier M."/>
            <person name="Venter J.C."/>
        </authorList>
    </citation>
    <scope>NUCLEOTIDE SEQUENCE [LARGE SCALE GENOMIC DNA]</scope>
    <source>
        <strain>MJ11</strain>
    </source>
</reference>
<comment type="function">
    <text evidence="1">The alpha subunit is responsible for the aldol cleavage of indoleglycerol phosphate to indole and glyceraldehyde 3-phosphate.</text>
</comment>
<comment type="catalytic activity">
    <reaction evidence="1">
        <text>(1S,2R)-1-C-(indol-3-yl)glycerol 3-phosphate + L-serine = D-glyceraldehyde 3-phosphate + L-tryptophan + H2O</text>
        <dbReference type="Rhea" id="RHEA:10532"/>
        <dbReference type="ChEBI" id="CHEBI:15377"/>
        <dbReference type="ChEBI" id="CHEBI:33384"/>
        <dbReference type="ChEBI" id="CHEBI:57912"/>
        <dbReference type="ChEBI" id="CHEBI:58866"/>
        <dbReference type="ChEBI" id="CHEBI:59776"/>
        <dbReference type="EC" id="4.2.1.20"/>
    </reaction>
</comment>
<comment type="pathway">
    <text evidence="1">Amino-acid biosynthesis; L-tryptophan biosynthesis; L-tryptophan from chorismate: step 5/5.</text>
</comment>
<comment type="subunit">
    <text evidence="1">Tetramer of two alpha and two beta chains.</text>
</comment>
<comment type="similarity">
    <text evidence="1">Belongs to the TrpA family.</text>
</comment>
<gene>
    <name evidence="1" type="primary">trpA</name>
    <name type="ordered locus">VFMJ11_1110</name>
</gene>
<accession>B5FDB6</accession>
<keyword id="KW-0028">Amino-acid biosynthesis</keyword>
<keyword id="KW-0057">Aromatic amino acid biosynthesis</keyword>
<keyword id="KW-0456">Lyase</keyword>
<keyword id="KW-0822">Tryptophan biosynthesis</keyword>